<reference key="1">
    <citation type="journal article" date="2005" name="Nucleic Acids Res.">
        <title>The genome sequence of Xanthomonas oryzae pathovar oryzae KACC10331, the bacterial blight pathogen of rice.</title>
        <authorList>
            <person name="Lee B.-M."/>
            <person name="Park Y.-J."/>
            <person name="Park D.-S."/>
            <person name="Kang H.-W."/>
            <person name="Kim J.-G."/>
            <person name="Song E.-S."/>
            <person name="Park I.-C."/>
            <person name="Yoon U.-H."/>
            <person name="Hahn J.-H."/>
            <person name="Koo B.-S."/>
            <person name="Lee G.-B."/>
            <person name="Kim H."/>
            <person name="Park H.-S."/>
            <person name="Yoon K.-O."/>
            <person name="Kim J.-H."/>
            <person name="Jung C.-H."/>
            <person name="Koh N.-H."/>
            <person name="Seo J.-S."/>
            <person name="Go S.-J."/>
        </authorList>
    </citation>
    <scope>NUCLEOTIDE SEQUENCE [LARGE SCALE GENOMIC DNA]</scope>
    <source>
        <strain>KACC10331 / KXO85</strain>
    </source>
</reference>
<comment type="function">
    <text evidence="1">ATP-dependent serine protease that mediates the selective degradation of mutant and abnormal proteins as well as certain short-lived regulatory proteins. Required for cellular homeostasis and for survival from DNA damage and developmental changes induced by stress. Degrades polypeptides processively to yield small peptide fragments that are 5 to 10 amino acids long. Binds to DNA in a double-stranded, site-specific manner.</text>
</comment>
<comment type="catalytic activity">
    <reaction evidence="1">
        <text>Hydrolysis of proteins in presence of ATP.</text>
        <dbReference type="EC" id="3.4.21.53"/>
    </reaction>
</comment>
<comment type="subunit">
    <text evidence="1">Homohexamer. Organized in a ring with a central cavity.</text>
</comment>
<comment type="subcellular location">
    <subcellularLocation>
        <location evidence="1">Cytoplasm</location>
    </subcellularLocation>
</comment>
<comment type="induction">
    <text evidence="1">By heat shock.</text>
</comment>
<comment type="similarity">
    <text evidence="1">Belongs to the peptidase S16 family.</text>
</comment>
<accession>Q5H432</accession>
<protein>
    <recommendedName>
        <fullName evidence="1">Lon protease</fullName>
        <ecNumber evidence="1">3.4.21.53</ecNumber>
    </recommendedName>
    <alternativeName>
        <fullName evidence="1">ATP-dependent protease La</fullName>
    </alternativeName>
</protein>
<keyword id="KW-0067">ATP-binding</keyword>
<keyword id="KW-0963">Cytoplasm</keyword>
<keyword id="KW-0378">Hydrolase</keyword>
<keyword id="KW-0547">Nucleotide-binding</keyword>
<keyword id="KW-0645">Protease</keyword>
<keyword id="KW-1185">Reference proteome</keyword>
<keyword id="KW-0720">Serine protease</keyword>
<keyword id="KW-0346">Stress response</keyword>
<dbReference type="EC" id="3.4.21.53" evidence="1"/>
<dbReference type="EMBL" id="AE013598">
    <property type="protein sequence ID" value="AAW74289.1"/>
    <property type="molecule type" value="Genomic_DNA"/>
</dbReference>
<dbReference type="SMR" id="Q5H432"/>
<dbReference type="STRING" id="291331.XOO1035"/>
<dbReference type="MEROPS" id="S16.001"/>
<dbReference type="KEGG" id="xoo:XOO1035"/>
<dbReference type="HOGENOM" id="CLU_004109_4_3_6"/>
<dbReference type="Proteomes" id="UP000006735">
    <property type="component" value="Chromosome"/>
</dbReference>
<dbReference type="GO" id="GO:0005737">
    <property type="term" value="C:cytoplasm"/>
    <property type="evidence" value="ECO:0007669"/>
    <property type="project" value="UniProtKB-SubCell"/>
</dbReference>
<dbReference type="GO" id="GO:0005524">
    <property type="term" value="F:ATP binding"/>
    <property type="evidence" value="ECO:0007669"/>
    <property type="project" value="UniProtKB-UniRule"/>
</dbReference>
<dbReference type="GO" id="GO:0016887">
    <property type="term" value="F:ATP hydrolysis activity"/>
    <property type="evidence" value="ECO:0007669"/>
    <property type="project" value="UniProtKB-UniRule"/>
</dbReference>
<dbReference type="GO" id="GO:0004176">
    <property type="term" value="F:ATP-dependent peptidase activity"/>
    <property type="evidence" value="ECO:0007669"/>
    <property type="project" value="UniProtKB-UniRule"/>
</dbReference>
<dbReference type="GO" id="GO:0043565">
    <property type="term" value="F:sequence-specific DNA binding"/>
    <property type="evidence" value="ECO:0007669"/>
    <property type="project" value="UniProtKB-UniRule"/>
</dbReference>
<dbReference type="GO" id="GO:0004252">
    <property type="term" value="F:serine-type endopeptidase activity"/>
    <property type="evidence" value="ECO:0007669"/>
    <property type="project" value="UniProtKB-UniRule"/>
</dbReference>
<dbReference type="GO" id="GO:0034605">
    <property type="term" value="P:cellular response to heat"/>
    <property type="evidence" value="ECO:0007669"/>
    <property type="project" value="UniProtKB-UniRule"/>
</dbReference>
<dbReference type="GO" id="GO:0006515">
    <property type="term" value="P:protein quality control for misfolded or incompletely synthesized proteins"/>
    <property type="evidence" value="ECO:0007669"/>
    <property type="project" value="UniProtKB-UniRule"/>
</dbReference>
<dbReference type="CDD" id="cd19500">
    <property type="entry name" value="RecA-like_Lon"/>
    <property type="match status" value="1"/>
</dbReference>
<dbReference type="FunFam" id="3.30.230.10:FF:000010">
    <property type="entry name" value="Lon protease"/>
    <property type="match status" value="1"/>
</dbReference>
<dbReference type="FunFam" id="1.20.5.5270:FF:000002">
    <property type="entry name" value="Lon protease homolog"/>
    <property type="match status" value="1"/>
</dbReference>
<dbReference type="FunFam" id="3.40.50.300:FF:000021">
    <property type="entry name" value="Lon protease homolog"/>
    <property type="match status" value="1"/>
</dbReference>
<dbReference type="Gene3D" id="1.10.8.60">
    <property type="match status" value="1"/>
</dbReference>
<dbReference type="Gene3D" id="1.20.5.5270">
    <property type="match status" value="1"/>
</dbReference>
<dbReference type="Gene3D" id="1.20.58.1480">
    <property type="match status" value="1"/>
</dbReference>
<dbReference type="Gene3D" id="3.30.230.10">
    <property type="match status" value="1"/>
</dbReference>
<dbReference type="Gene3D" id="2.30.130.40">
    <property type="entry name" value="LON domain-like"/>
    <property type="match status" value="1"/>
</dbReference>
<dbReference type="Gene3D" id="3.40.50.300">
    <property type="entry name" value="P-loop containing nucleotide triphosphate hydrolases"/>
    <property type="match status" value="1"/>
</dbReference>
<dbReference type="HAMAP" id="MF_01973">
    <property type="entry name" value="lon_bact"/>
    <property type="match status" value="1"/>
</dbReference>
<dbReference type="InterPro" id="IPR003593">
    <property type="entry name" value="AAA+_ATPase"/>
</dbReference>
<dbReference type="InterPro" id="IPR003959">
    <property type="entry name" value="ATPase_AAA_core"/>
</dbReference>
<dbReference type="InterPro" id="IPR027543">
    <property type="entry name" value="Lon_bac"/>
</dbReference>
<dbReference type="InterPro" id="IPR004815">
    <property type="entry name" value="Lon_bac/euk-typ"/>
</dbReference>
<dbReference type="InterPro" id="IPR054594">
    <property type="entry name" value="Lon_lid"/>
</dbReference>
<dbReference type="InterPro" id="IPR008269">
    <property type="entry name" value="Lon_proteolytic"/>
</dbReference>
<dbReference type="InterPro" id="IPR027065">
    <property type="entry name" value="Lon_Prtase"/>
</dbReference>
<dbReference type="InterPro" id="IPR003111">
    <property type="entry name" value="Lon_prtase_N"/>
</dbReference>
<dbReference type="InterPro" id="IPR046336">
    <property type="entry name" value="Lon_prtase_N_sf"/>
</dbReference>
<dbReference type="InterPro" id="IPR027417">
    <property type="entry name" value="P-loop_NTPase"/>
</dbReference>
<dbReference type="InterPro" id="IPR008268">
    <property type="entry name" value="Peptidase_S16_AS"/>
</dbReference>
<dbReference type="InterPro" id="IPR015947">
    <property type="entry name" value="PUA-like_sf"/>
</dbReference>
<dbReference type="InterPro" id="IPR020568">
    <property type="entry name" value="Ribosomal_Su5_D2-typ_SF"/>
</dbReference>
<dbReference type="InterPro" id="IPR014721">
    <property type="entry name" value="Ribsml_uS5_D2-typ_fold_subgr"/>
</dbReference>
<dbReference type="NCBIfam" id="TIGR00763">
    <property type="entry name" value="lon"/>
    <property type="match status" value="1"/>
</dbReference>
<dbReference type="NCBIfam" id="NF008053">
    <property type="entry name" value="PRK10787.1"/>
    <property type="match status" value="1"/>
</dbReference>
<dbReference type="PANTHER" id="PTHR10046">
    <property type="entry name" value="ATP DEPENDENT LON PROTEASE FAMILY MEMBER"/>
    <property type="match status" value="1"/>
</dbReference>
<dbReference type="Pfam" id="PF00004">
    <property type="entry name" value="AAA"/>
    <property type="match status" value="1"/>
</dbReference>
<dbReference type="Pfam" id="PF05362">
    <property type="entry name" value="Lon_C"/>
    <property type="match status" value="1"/>
</dbReference>
<dbReference type="Pfam" id="PF22667">
    <property type="entry name" value="Lon_lid"/>
    <property type="match status" value="1"/>
</dbReference>
<dbReference type="Pfam" id="PF02190">
    <property type="entry name" value="LON_substr_bdg"/>
    <property type="match status" value="1"/>
</dbReference>
<dbReference type="PIRSF" id="PIRSF001174">
    <property type="entry name" value="Lon_proteas"/>
    <property type="match status" value="1"/>
</dbReference>
<dbReference type="PRINTS" id="PR00830">
    <property type="entry name" value="ENDOLAPTASE"/>
</dbReference>
<dbReference type="SMART" id="SM00382">
    <property type="entry name" value="AAA"/>
    <property type="match status" value="1"/>
</dbReference>
<dbReference type="SMART" id="SM00464">
    <property type="entry name" value="LON"/>
    <property type="match status" value="1"/>
</dbReference>
<dbReference type="SUPFAM" id="SSF52540">
    <property type="entry name" value="P-loop containing nucleoside triphosphate hydrolases"/>
    <property type="match status" value="1"/>
</dbReference>
<dbReference type="SUPFAM" id="SSF88697">
    <property type="entry name" value="PUA domain-like"/>
    <property type="match status" value="1"/>
</dbReference>
<dbReference type="SUPFAM" id="SSF54211">
    <property type="entry name" value="Ribosomal protein S5 domain 2-like"/>
    <property type="match status" value="1"/>
</dbReference>
<dbReference type="PROSITE" id="PS51787">
    <property type="entry name" value="LON_N"/>
    <property type="match status" value="1"/>
</dbReference>
<dbReference type="PROSITE" id="PS51786">
    <property type="entry name" value="LON_PROTEOLYTIC"/>
    <property type="match status" value="1"/>
</dbReference>
<dbReference type="PROSITE" id="PS01046">
    <property type="entry name" value="LON_SER"/>
    <property type="match status" value="1"/>
</dbReference>
<evidence type="ECO:0000255" key="1">
    <source>
        <dbReference type="HAMAP-Rule" id="MF_01973"/>
    </source>
</evidence>
<evidence type="ECO:0000255" key="2">
    <source>
        <dbReference type="PROSITE-ProRule" id="PRU01122"/>
    </source>
</evidence>
<evidence type="ECO:0000255" key="3">
    <source>
        <dbReference type="PROSITE-ProRule" id="PRU01123"/>
    </source>
</evidence>
<evidence type="ECO:0000256" key="4">
    <source>
        <dbReference type="SAM" id="MobiDB-lite"/>
    </source>
</evidence>
<proteinExistence type="inferred from homology"/>
<sequence>MQHLADGPITGPSAFLFPQIPIPAERPMAQSQPEVLDLPVLPLRDVVVFPHMVIPLFVGRDKSMRALEKAMEADKRILLVAQKSAETDDPAAVDLHTVGTLAQVLQLLKLPDGTIKVLVEGLSRVTVDKVVEQDGALQGQGTEVEASDAREPREVEAIARSLMSLFEQYVKTNRKLPPELLQTLAGIDEPGRLADTIAPHIGVRLADKQRLLEITDIGERLELLVGLVDGEIDVQQLEKRIRGRVKSQMEKSQREYYLNEQMKAIQKELGDLDDVPGELEELARKIAEAGMPKPVETKAKAELNKLKQMSPMSAEAAVVRNYLDWLLGVPWKKRTKVRKDLKVAEDTLDADHYGLDKVKERILEYLAVQSRVKQMKGPILCLVGPPGVGKTSLGQSIAKATNRKFVRMSLGGIRDEAEIRGHRRTYVGSMPGRLVQNLNKVGSKNPLFLLDEIDKMSMDFRGDPSSALLEVLDPEQNNSFNDHYLEVDLDLSEVMFVATSNSLNIPGPLLDRMEVIRIPGYTEDEKLNIAMRYLVPKQIKANGLKPEEIEIGGDAIQDIVRYYTRESGVRNLEREVAKICRKVVKEIALAGPQPAAKKAVAKKGKPKALVTVNAKNLDKYLGVRRFDFGRAEEENEIGLVTGLAWTEVGGELLQVESTLVPGKGNLILTGQLGNVMKESASAALSVVRSRAERLGIDVDFLQKQDVHVHVPDGATPKDGPSAGIAMVTSLVSVLTKVPIRADVAMTGEITLRGRVSAIGGLKEKLLAALRGGIRTVLIPGENRKDLADIPANVTRDLKIVPVKWIDEVLDLALERPLTPKKAGKEKARKTAPRVAVRGKSRSTPGTRVKH</sequence>
<organism>
    <name type="scientific">Xanthomonas oryzae pv. oryzae (strain KACC10331 / KXO85)</name>
    <dbReference type="NCBI Taxonomy" id="291331"/>
    <lineage>
        <taxon>Bacteria</taxon>
        <taxon>Pseudomonadati</taxon>
        <taxon>Pseudomonadota</taxon>
        <taxon>Gammaproteobacteria</taxon>
        <taxon>Lysobacterales</taxon>
        <taxon>Lysobacteraceae</taxon>
        <taxon>Xanthomonas</taxon>
    </lineage>
</organism>
<gene>
    <name evidence="1" type="primary">lon</name>
    <name type="ordered locus">XOO1035</name>
</gene>
<name>LON_XANOR</name>
<feature type="chain" id="PRO_0000396617" description="Lon protease">
    <location>
        <begin position="1"/>
        <end position="850"/>
    </location>
</feature>
<feature type="domain" description="Lon N-terminal" evidence="3">
    <location>
        <begin position="38"/>
        <end position="232"/>
    </location>
</feature>
<feature type="domain" description="Lon proteolytic" evidence="2">
    <location>
        <begin position="634"/>
        <end position="815"/>
    </location>
</feature>
<feature type="region of interest" description="Disordered" evidence="4">
    <location>
        <begin position="819"/>
        <end position="850"/>
    </location>
</feature>
<feature type="compositionally biased region" description="Basic residues" evidence="4">
    <location>
        <begin position="821"/>
        <end position="840"/>
    </location>
</feature>
<feature type="compositionally biased region" description="Polar residues" evidence="4">
    <location>
        <begin position="841"/>
        <end position="850"/>
    </location>
</feature>
<feature type="active site" evidence="1">
    <location>
        <position position="721"/>
    </location>
</feature>
<feature type="active site" evidence="1">
    <location>
        <position position="764"/>
    </location>
</feature>
<feature type="binding site" evidence="1">
    <location>
        <begin position="384"/>
        <end position="391"/>
    </location>
    <ligand>
        <name>ATP</name>
        <dbReference type="ChEBI" id="CHEBI:30616"/>
    </ligand>
</feature>